<organism>
    <name type="scientific">Bos taurus</name>
    <name type="common">Bovine</name>
    <dbReference type="NCBI Taxonomy" id="9913"/>
    <lineage>
        <taxon>Eukaryota</taxon>
        <taxon>Metazoa</taxon>
        <taxon>Chordata</taxon>
        <taxon>Craniata</taxon>
        <taxon>Vertebrata</taxon>
        <taxon>Euteleostomi</taxon>
        <taxon>Mammalia</taxon>
        <taxon>Eutheria</taxon>
        <taxon>Laurasiatheria</taxon>
        <taxon>Artiodactyla</taxon>
        <taxon>Ruminantia</taxon>
        <taxon>Pecora</taxon>
        <taxon>Bovidae</taxon>
        <taxon>Bovinae</taxon>
        <taxon>Bos</taxon>
    </lineage>
</organism>
<gene>
    <name type="primary">CDCA7</name>
</gene>
<reference key="1">
    <citation type="submission" date="2005-10" db="EMBL/GenBank/DDBJ databases">
        <authorList>
            <consortium name="NIH - Mammalian Gene Collection (MGC) project"/>
        </authorList>
    </citation>
    <scope>NUCLEOTIDE SEQUENCE [LARGE SCALE MRNA]</scope>
    <source>
        <strain>Hereford</strain>
        <tissue>Heart ventricle</tissue>
    </source>
</reference>
<dbReference type="EMBL" id="BC108118">
    <property type="protein sequence ID" value="AAI08119.1"/>
    <property type="molecule type" value="mRNA"/>
</dbReference>
<dbReference type="RefSeq" id="NP_001032565.1">
    <property type="nucleotide sequence ID" value="NM_001037488.2"/>
</dbReference>
<dbReference type="SMR" id="Q32PH1"/>
<dbReference type="FunCoup" id="Q32PH1">
    <property type="interactions" value="690"/>
</dbReference>
<dbReference type="STRING" id="9913.ENSBTAP00000004495"/>
<dbReference type="PaxDb" id="9913-ENSBTAP00000004495"/>
<dbReference type="GeneID" id="614893"/>
<dbReference type="KEGG" id="bta:614893"/>
<dbReference type="CTD" id="83879"/>
<dbReference type="VEuPathDB" id="HostDB:ENSBTAG00000003458"/>
<dbReference type="eggNOG" id="ENOG502QQPE">
    <property type="taxonomic scope" value="Eukaryota"/>
</dbReference>
<dbReference type="HOGENOM" id="CLU_035988_2_0_1"/>
<dbReference type="InParanoid" id="Q32PH1"/>
<dbReference type="OMA" id="CTNVREK"/>
<dbReference type="OrthoDB" id="298344at2759"/>
<dbReference type="TreeFam" id="TF101076"/>
<dbReference type="Proteomes" id="UP000009136">
    <property type="component" value="Chromosome 2"/>
</dbReference>
<dbReference type="Bgee" id="ENSBTAG00000003458">
    <property type="expression patterns" value="Expressed in thymus and 102 other cell types or tissues"/>
</dbReference>
<dbReference type="GO" id="GO:0005737">
    <property type="term" value="C:cytoplasm"/>
    <property type="evidence" value="ECO:0007669"/>
    <property type="project" value="UniProtKB-SubCell"/>
</dbReference>
<dbReference type="GO" id="GO:0005634">
    <property type="term" value="C:nucleus"/>
    <property type="evidence" value="ECO:0000318"/>
    <property type="project" value="GO_Central"/>
</dbReference>
<dbReference type="GO" id="GO:0006915">
    <property type="term" value="P:apoptotic process"/>
    <property type="evidence" value="ECO:0007669"/>
    <property type="project" value="UniProtKB-KW"/>
</dbReference>
<dbReference type="GO" id="GO:0006355">
    <property type="term" value="P:regulation of DNA-templated transcription"/>
    <property type="evidence" value="ECO:0007669"/>
    <property type="project" value="InterPro"/>
</dbReference>
<dbReference type="InterPro" id="IPR040221">
    <property type="entry name" value="CDCA7/CDA7L"/>
</dbReference>
<dbReference type="InterPro" id="IPR018866">
    <property type="entry name" value="Znf-4CXXC_R1"/>
</dbReference>
<dbReference type="PANTHER" id="PTHR31169:SF2">
    <property type="entry name" value="CELL DIVISION CYCLE-ASSOCIATED PROTEIN 7"/>
    <property type="match status" value="1"/>
</dbReference>
<dbReference type="PANTHER" id="PTHR31169">
    <property type="entry name" value="OS05G0300700 PROTEIN"/>
    <property type="match status" value="1"/>
</dbReference>
<dbReference type="Pfam" id="PF10497">
    <property type="entry name" value="zf-4CXXC_R1"/>
    <property type="match status" value="1"/>
</dbReference>
<evidence type="ECO:0000250" key="1"/>
<evidence type="ECO:0000250" key="2">
    <source>
        <dbReference type="UniProtKB" id="Q9BWT1"/>
    </source>
</evidence>
<evidence type="ECO:0000250" key="3">
    <source>
        <dbReference type="UniProtKB" id="Q9D0M2"/>
    </source>
</evidence>
<evidence type="ECO:0000256" key="4">
    <source>
        <dbReference type="SAM" id="MobiDB-lite"/>
    </source>
</evidence>
<protein>
    <recommendedName>
        <fullName>Cell division cycle-associated protein 7</fullName>
    </recommendedName>
</protein>
<accession>Q32PH1</accession>
<comment type="function">
    <text evidence="1">Participates in MYC-mediated cell transformation and apoptosis; induces anchorage-independent growth and clonogenicity in lymphoblastoid cells. Insufficient to induce tumorigenicity when overexpressed but contributes to MYC-mediated tumorigenesis. May play a role as transcriptional regulator (By similarity).</text>
</comment>
<comment type="subunit">
    <text evidence="1">Interacts with MYC (via C-terminus), YWHAE and YWHAZ.</text>
</comment>
<comment type="subcellular location">
    <subcellularLocation>
        <location evidence="1">Nucleus</location>
    </subcellularLocation>
    <subcellularLocation>
        <location evidence="1">Cytoplasm</location>
    </subcellularLocation>
    <text evidence="1">Predominantly nuclear with some expression also seen in the cytoplasm. Predominantly cytoplasmic when phosphorylated at Thr-163 (By similarity).</text>
</comment>
<comment type="PTM">
    <text evidence="1">Phosphorylation at Thr-163 promotes interaction with YWHAE and YWHAZ, dissociation from MYC and sequestration in the cytoplasm.</text>
</comment>
<proteinExistence type="evidence at transcript level"/>
<sequence>MDARRARQKDCRAKKNFKKFRYVKLISMETPSSSDDSCDSFASDNFANTRLQANREGCRTRSQCTRSGPLRVAMKFPPRSTRGAANKRTVPPEPPENSVTDSNSDSEDESGMNFLEKRALNIKQNKAMLAKLMSELESFPGSFPGRRSLPGPSSRPKTPRRRTFPGVACRRNPERRARPLTRSRSRVLGSLSALPTEEEEEEEEEEDKYMLVRKRKSMVGYMNEDDMPRSRRPGPMTLPHVVRPVDEITEEELENICNNSREKIYNRSLGSTCHQCRQKTIDTKTNCRNPECWGVRGQFCGPCLRNRYGEEVKDALLDPNWHCPPCRGICNCSFCRQRDGRCATGVLVYLAKYHGFGNVHAYLKSLKQEFEMQG</sequence>
<keyword id="KW-0053">Apoptosis</keyword>
<keyword id="KW-0963">Cytoplasm</keyword>
<keyword id="KW-1017">Isopeptide bond</keyword>
<keyword id="KW-0539">Nucleus</keyword>
<keyword id="KW-0597">Phosphoprotein</keyword>
<keyword id="KW-1185">Reference proteome</keyword>
<keyword id="KW-0804">Transcription</keyword>
<keyword id="KW-0805">Transcription regulation</keyword>
<keyword id="KW-0832">Ubl conjugation</keyword>
<feature type="chain" id="PRO_0000249309" description="Cell division cycle-associated protein 7">
    <location>
        <begin position="1"/>
        <end position="374"/>
    </location>
</feature>
<feature type="region of interest" description="Disordered" evidence="4">
    <location>
        <begin position="53"/>
        <end position="110"/>
    </location>
</feature>
<feature type="region of interest" description="Disordered" evidence="4">
    <location>
        <begin position="138"/>
        <end position="208"/>
    </location>
</feature>
<feature type="region of interest" description="Interaction with MYC" evidence="1">
    <location>
        <begin position="146"/>
        <end position="170"/>
    </location>
</feature>
<feature type="region of interest" description="Mediates transcriptional activity" evidence="1">
    <location>
        <begin position="250"/>
        <end position="374"/>
    </location>
</feature>
<feature type="short sequence motif" description="Nuclear localization signal" evidence="1">
    <location>
        <begin position="160"/>
        <end position="176"/>
    </location>
</feature>
<feature type="compositionally biased region" description="Acidic residues" evidence="4">
    <location>
        <begin position="196"/>
        <end position="207"/>
    </location>
</feature>
<feature type="modified residue" description="Phosphoserine" evidence="2">
    <location>
        <position position="142"/>
    </location>
</feature>
<feature type="modified residue" description="Phosphothreonine" evidence="2">
    <location>
        <position position="163"/>
    </location>
</feature>
<feature type="modified residue" description="Phosphoserine" evidence="2">
    <location>
        <position position="190"/>
    </location>
</feature>
<feature type="modified residue" description="Phosphothreonine" evidence="3">
    <location>
        <position position="196"/>
    </location>
</feature>
<feature type="modified residue" description="Phosphoserine" evidence="3">
    <location>
        <position position="217"/>
    </location>
</feature>
<feature type="cross-link" description="Glycyl lysine isopeptide (Lys-Gly) (interchain with G-Cter in SUMO2)" evidence="2">
    <location>
        <position position="208"/>
    </location>
</feature>
<name>CDCA7_BOVIN</name>